<dbReference type="EC" id="3.4.21.88" evidence="1"/>
<dbReference type="EMBL" id="CP000301">
    <property type="protein sequence ID" value="ABD88005.1"/>
    <property type="molecule type" value="Genomic_DNA"/>
</dbReference>
<dbReference type="SMR" id="Q215D1"/>
<dbReference type="STRING" id="316056.RPC_2454"/>
<dbReference type="MEROPS" id="S24.001"/>
<dbReference type="KEGG" id="rpc:RPC_2454"/>
<dbReference type="eggNOG" id="COG1974">
    <property type="taxonomic scope" value="Bacteria"/>
</dbReference>
<dbReference type="HOGENOM" id="CLU_066192_45_2_5"/>
<dbReference type="OrthoDB" id="9802364at2"/>
<dbReference type="GO" id="GO:0003677">
    <property type="term" value="F:DNA binding"/>
    <property type="evidence" value="ECO:0007669"/>
    <property type="project" value="UniProtKB-UniRule"/>
</dbReference>
<dbReference type="GO" id="GO:0004252">
    <property type="term" value="F:serine-type endopeptidase activity"/>
    <property type="evidence" value="ECO:0007669"/>
    <property type="project" value="UniProtKB-UniRule"/>
</dbReference>
<dbReference type="GO" id="GO:0006281">
    <property type="term" value="P:DNA repair"/>
    <property type="evidence" value="ECO:0007669"/>
    <property type="project" value="UniProtKB-UniRule"/>
</dbReference>
<dbReference type="GO" id="GO:0006260">
    <property type="term" value="P:DNA replication"/>
    <property type="evidence" value="ECO:0007669"/>
    <property type="project" value="UniProtKB-UniRule"/>
</dbReference>
<dbReference type="GO" id="GO:0045892">
    <property type="term" value="P:negative regulation of DNA-templated transcription"/>
    <property type="evidence" value="ECO:0007669"/>
    <property type="project" value="UniProtKB-UniRule"/>
</dbReference>
<dbReference type="GO" id="GO:0006508">
    <property type="term" value="P:proteolysis"/>
    <property type="evidence" value="ECO:0007669"/>
    <property type="project" value="InterPro"/>
</dbReference>
<dbReference type="GO" id="GO:0009432">
    <property type="term" value="P:SOS response"/>
    <property type="evidence" value="ECO:0007669"/>
    <property type="project" value="UniProtKB-UniRule"/>
</dbReference>
<dbReference type="CDD" id="cd06529">
    <property type="entry name" value="S24_LexA-like"/>
    <property type="match status" value="1"/>
</dbReference>
<dbReference type="FunFam" id="1.10.10.10:FF:000102">
    <property type="entry name" value="LexA repressor"/>
    <property type="match status" value="1"/>
</dbReference>
<dbReference type="FunFam" id="2.10.109.10:FF:000001">
    <property type="entry name" value="LexA repressor"/>
    <property type="match status" value="1"/>
</dbReference>
<dbReference type="Gene3D" id="2.10.109.10">
    <property type="entry name" value="Umud Fragment, subunit A"/>
    <property type="match status" value="1"/>
</dbReference>
<dbReference type="Gene3D" id="1.10.10.10">
    <property type="entry name" value="Winged helix-like DNA-binding domain superfamily/Winged helix DNA-binding domain"/>
    <property type="match status" value="1"/>
</dbReference>
<dbReference type="HAMAP" id="MF_00015">
    <property type="entry name" value="LexA"/>
    <property type="match status" value="1"/>
</dbReference>
<dbReference type="InterPro" id="IPR006200">
    <property type="entry name" value="LexA"/>
</dbReference>
<dbReference type="InterPro" id="IPR039418">
    <property type="entry name" value="LexA-like"/>
</dbReference>
<dbReference type="InterPro" id="IPR036286">
    <property type="entry name" value="LexA/Signal_pep-like_sf"/>
</dbReference>
<dbReference type="InterPro" id="IPR006199">
    <property type="entry name" value="LexA_DNA-bd_dom"/>
</dbReference>
<dbReference type="InterPro" id="IPR050077">
    <property type="entry name" value="LexA_repressor"/>
</dbReference>
<dbReference type="InterPro" id="IPR006197">
    <property type="entry name" value="Peptidase_S24_LexA"/>
</dbReference>
<dbReference type="InterPro" id="IPR015927">
    <property type="entry name" value="Peptidase_S24_S26A/B/C"/>
</dbReference>
<dbReference type="InterPro" id="IPR036388">
    <property type="entry name" value="WH-like_DNA-bd_sf"/>
</dbReference>
<dbReference type="InterPro" id="IPR036390">
    <property type="entry name" value="WH_DNA-bd_sf"/>
</dbReference>
<dbReference type="NCBIfam" id="TIGR00498">
    <property type="entry name" value="lexA"/>
    <property type="match status" value="1"/>
</dbReference>
<dbReference type="PANTHER" id="PTHR33516">
    <property type="entry name" value="LEXA REPRESSOR"/>
    <property type="match status" value="1"/>
</dbReference>
<dbReference type="PANTHER" id="PTHR33516:SF2">
    <property type="entry name" value="LEXA REPRESSOR-RELATED"/>
    <property type="match status" value="1"/>
</dbReference>
<dbReference type="Pfam" id="PF01726">
    <property type="entry name" value="LexA_DNA_bind"/>
    <property type="match status" value="1"/>
</dbReference>
<dbReference type="Pfam" id="PF00717">
    <property type="entry name" value="Peptidase_S24"/>
    <property type="match status" value="1"/>
</dbReference>
<dbReference type="PRINTS" id="PR00726">
    <property type="entry name" value="LEXASERPTASE"/>
</dbReference>
<dbReference type="SUPFAM" id="SSF51306">
    <property type="entry name" value="LexA/Signal peptidase"/>
    <property type="match status" value="1"/>
</dbReference>
<dbReference type="SUPFAM" id="SSF46785">
    <property type="entry name" value="Winged helix' DNA-binding domain"/>
    <property type="match status" value="1"/>
</dbReference>
<organism>
    <name type="scientific">Rhodopseudomonas palustris (strain BisB18)</name>
    <dbReference type="NCBI Taxonomy" id="316056"/>
    <lineage>
        <taxon>Bacteria</taxon>
        <taxon>Pseudomonadati</taxon>
        <taxon>Pseudomonadota</taxon>
        <taxon>Alphaproteobacteria</taxon>
        <taxon>Hyphomicrobiales</taxon>
        <taxon>Nitrobacteraceae</taxon>
        <taxon>Rhodopseudomonas</taxon>
    </lineage>
</organism>
<accession>Q215D1</accession>
<reference key="1">
    <citation type="submission" date="2006-03" db="EMBL/GenBank/DDBJ databases">
        <title>Complete sequence of Rhodopseudomonas palustris BisB18.</title>
        <authorList>
            <consortium name="US DOE Joint Genome Institute"/>
            <person name="Copeland A."/>
            <person name="Lucas S."/>
            <person name="Lapidus A."/>
            <person name="Barry K."/>
            <person name="Detter J.C."/>
            <person name="Glavina del Rio T."/>
            <person name="Hammon N."/>
            <person name="Israni S."/>
            <person name="Dalin E."/>
            <person name="Tice H."/>
            <person name="Pitluck S."/>
            <person name="Chain P."/>
            <person name="Malfatti S."/>
            <person name="Shin M."/>
            <person name="Vergez L."/>
            <person name="Schmutz J."/>
            <person name="Larimer F."/>
            <person name="Land M."/>
            <person name="Hauser L."/>
            <person name="Pelletier D.A."/>
            <person name="Kyrpides N."/>
            <person name="Anderson I."/>
            <person name="Oda Y."/>
            <person name="Harwood C.S."/>
            <person name="Richardson P."/>
        </authorList>
    </citation>
    <scope>NUCLEOTIDE SEQUENCE [LARGE SCALE GENOMIC DNA]</scope>
    <source>
        <strain>BisB18</strain>
    </source>
</reference>
<keyword id="KW-0068">Autocatalytic cleavage</keyword>
<keyword id="KW-0227">DNA damage</keyword>
<keyword id="KW-0234">DNA repair</keyword>
<keyword id="KW-0235">DNA replication</keyword>
<keyword id="KW-0238">DNA-binding</keyword>
<keyword id="KW-0378">Hydrolase</keyword>
<keyword id="KW-0678">Repressor</keyword>
<keyword id="KW-0742">SOS response</keyword>
<keyword id="KW-0804">Transcription</keyword>
<keyword id="KW-0805">Transcription regulation</keyword>
<feature type="chain" id="PRO_1000001327" description="LexA repressor">
    <location>
        <begin position="1"/>
        <end position="237"/>
    </location>
</feature>
<feature type="DNA-binding region" description="H-T-H motif" evidence="1">
    <location>
        <begin position="26"/>
        <end position="46"/>
    </location>
</feature>
<feature type="active site" description="For autocatalytic cleavage activity" evidence="1">
    <location>
        <position position="158"/>
    </location>
</feature>
<feature type="active site" description="For autocatalytic cleavage activity" evidence="1">
    <location>
        <position position="196"/>
    </location>
</feature>
<feature type="site" description="Cleavage; by autolysis" evidence="1">
    <location>
        <begin position="123"/>
        <end position="124"/>
    </location>
</feature>
<protein>
    <recommendedName>
        <fullName evidence="1">LexA repressor</fullName>
        <ecNumber evidence="1">3.4.21.88</ecNumber>
    </recommendedName>
</protein>
<gene>
    <name evidence="1" type="primary">lexA</name>
    <name type="ordered locus">RPC_2454</name>
</gene>
<sequence length="237" mass="25880">MLTRKQYELLRFINERLKEAGVPPSFDEMKDALDLRSKSGIHRLITALEERGFIRRLPNRARAIEVIKLPELGVNPGGGNGRRGFTPSVIEGNLGRVRPAASLGGDDDSGRTVAVPVMGRIAAGTPIEALQTRSHTISMPADMLGSGEHYALEVRGDSMVDAGILDGDMALIQKNDSADTGDIVVALIDEEEATLKRFRRRGASIALEPANAAYEVRILPPNRVRIQGKLIGLYRKY</sequence>
<proteinExistence type="inferred from homology"/>
<comment type="function">
    <text evidence="1">Represses a number of genes involved in the response to DNA damage (SOS response), including recA and lexA. In the presence of single-stranded DNA, RecA interacts with LexA causing an autocatalytic cleavage which disrupts the DNA-binding part of LexA, leading to derepression of the SOS regulon and eventually DNA repair.</text>
</comment>
<comment type="catalytic activity">
    <reaction evidence="1">
        <text>Hydrolysis of Ala-|-Gly bond in repressor LexA.</text>
        <dbReference type="EC" id="3.4.21.88"/>
    </reaction>
</comment>
<comment type="subunit">
    <text evidence="1">Homodimer.</text>
</comment>
<comment type="similarity">
    <text evidence="1">Belongs to the peptidase S24 family.</text>
</comment>
<evidence type="ECO:0000255" key="1">
    <source>
        <dbReference type="HAMAP-Rule" id="MF_00015"/>
    </source>
</evidence>
<name>LEXA_RHOPB</name>